<accession>P46989</accession>
<accession>D6VW11</accession>
<accession>Q86ZR9</accession>
<evidence type="ECO:0000255" key="1"/>
<evidence type="ECO:0000255" key="2">
    <source>
        <dbReference type="PROSITE-ProRule" id="PRU01262"/>
    </source>
</evidence>
<evidence type="ECO:0000256" key="3">
    <source>
        <dbReference type="SAM" id="MobiDB-lite"/>
    </source>
</evidence>
<evidence type="ECO:0000269" key="4">
    <source>
    </source>
</evidence>
<evidence type="ECO:0000269" key="5">
    <source>
    </source>
</evidence>
<evidence type="ECO:0000269" key="6">
    <source>
    </source>
</evidence>
<evidence type="ECO:0000269" key="7">
    <source>
    </source>
</evidence>
<evidence type="ECO:0000269" key="8">
    <source>
    </source>
</evidence>
<evidence type="ECO:0000305" key="9"/>
<feature type="signal peptide" evidence="1">
    <location>
        <begin position="1"/>
        <end position="19"/>
    </location>
</feature>
<feature type="chain" id="PRO_0000001780" description="Autophagy-related protein 27">
    <location>
        <begin position="20"/>
        <end position="271"/>
    </location>
</feature>
<feature type="topological domain" description="Lumenal" evidence="6">
    <location>
        <begin position="20"/>
        <end position="199"/>
    </location>
</feature>
<feature type="transmembrane region" description="Helical" evidence="1">
    <location>
        <begin position="200"/>
        <end position="220"/>
    </location>
</feature>
<feature type="topological domain" description="Cytoplasmic" evidence="6">
    <location>
        <begin position="221"/>
        <end position="271"/>
    </location>
</feature>
<feature type="domain" description="MRH" evidence="2">
    <location>
        <begin position="20"/>
        <end position="166"/>
    </location>
</feature>
<feature type="region of interest" description="Disordered" evidence="3">
    <location>
        <begin position="161"/>
        <end position="194"/>
    </location>
</feature>
<feature type="compositionally biased region" description="Basic and acidic residues" evidence="3">
    <location>
        <begin position="166"/>
        <end position="189"/>
    </location>
</feature>
<feature type="disulfide bond" evidence="2">
    <location>
        <begin position="22"/>
        <end position="60"/>
    </location>
</feature>
<feature type="disulfide bond" evidence="2">
    <location>
        <begin position="71"/>
        <end position="78"/>
    </location>
</feature>
<feature type="disulfide bond" evidence="2">
    <location>
        <begin position="135"/>
        <end position="164"/>
    </location>
</feature>
<feature type="mutagenesis site" description="Abolishes the binding of phosphatidylinositol 3-phosphate and the cytoplasm to vacuole transport." evidence="4">
    <original>KKPAKK</original>
    <variation>AAPAAA</variation>
    <location>
        <begin position="188"/>
        <end position="193"/>
    </location>
</feature>
<keyword id="KW-0072">Autophagy</keyword>
<keyword id="KW-0968">Cytoplasmic vesicle</keyword>
<keyword id="KW-1015">Disulfide bond</keyword>
<keyword id="KW-0333">Golgi apparatus</keyword>
<keyword id="KW-0472">Membrane</keyword>
<keyword id="KW-0496">Mitochondrion</keyword>
<keyword id="KW-0653">Protein transport</keyword>
<keyword id="KW-1185">Reference proteome</keyword>
<keyword id="KW-0732">Signal</keyword>
<keyword id="KW-0812">Transmembrane</keyword>
<keyword id="KW-1133">Transmembrane helix</keyword>
<keyword id="KW-0813">Transport</keyword>
<gene>
    <name type="primary">ATG27</name>
    <name type="synonym">ETF1</name>
    <name type="ordered locus">YJL178C</name>
    <name type="ORF">J0490</name>
</gene>
<protein>
    <recommendedName>
        <fullName>Autophagy-related protein 27</fullName>
    </recommendedName>
    <alternativeName>
        <fullName>Enhancer of VPS34 missorting protein 1</fullName>
    </alternativeName>
</protein>
<comment type="function">
    <text evidence="4 6 7 8">Effector of VPS34 phosphatidylinositol 3-phosphate kinase signaling. Regulates the cytoplasm to vacuole transport (Cvt) vesicle formation. Plays a role in ATG protein retrieval from the pre-autophagosomal structure (PAS) and is especially required for autophagy-dependent cycling of ATG9.</text>
</comment>
<comment type="subunit">
    <text evidence="7">Forms a complex with ATG9 and ATG23.</text>
</comment>
<comment type="subcellular location">
    <subcellularLocation>
        <location>Cytoplasmic vesicle membrane</location>
        <topology>Single-pass type I membrane protein</topology>
    </subcellularLocation>
    <subcellularLocation>
        <location>Golgi apparatus membrane</location>
        <topology>Single-pass type I membrane protein</topology>
    </subcellularLocation>
    <subcellularLocation>
        <location>Mitochondrion membrane</location>
        <topology>Single-pass membrane protein</topology>
    </subcellularLocation>
    <subcellularLocation>
        <location>Preautophagosomal structure membrane</location>
        <topology>Single-pass type I membrane protein</topology>
    </subcellularLocation>
    <text>Cycles among the pre-autophagosomal structure (PAS), mitochondria and Golgi.</text>
</comment>
<comment type="miscellaneous">
    <text evidence="5">Present with 8970 molecules/cell in log phase SD medium.</text>
</comment>
<comment type="similarity">
    <text evidence="9">Belongs to the ATG27 family.</text>
</comment>
<comment type="sequence caution" evidence="9">
    <conflict type="frameshift">
        <sequence resource="EMBL-CDS" id="AAS56577"/>
    </conflict>
</comment>
<comment type="sequence caution" evidence="9">
    <conflict type="frameshift">
        <sequence resource="EMBL-CDS" id="CAA89473"/>
    </conflict>
</comment>
<dbReference type="EMBL" id="Z49453">
    <property type="protein sequence ID" value="CAA89473.1"/>
    <property type="status" value="ALT_FRAME"/>
    <property type="molecule type" value="Genomic_DNA"/>
</dbReference>
<dbReference type="EMBL" id="AY558251">
    <property type="protein sequence ID" value="AAS56577.1"/>
    <property type="status" value="ALT_FRAME"/>
    <property type="molecule type" value="Genomic_DNA"/>
</dbReference>
<dbReference type="EMBL" id="AY260894">
    <property type="protein sequence ID" value="AAP21762.1"/>
    <property type="molecule type" value="Genomic_DNA"/>
</dbReference>
<dbReference type="EMBL" id="BK006943">
    <property type="protein sequence ID" value="DAA08627.1"/>
    <property type="molecule type" value="Genomic_DNA"/>
</dbReference>
<dbReference type="PIR" id="S56961">
    <property type="entry name" value="S56961"/>
</dbReference>
<dbReference type="RefSeq" id="NP_012357.2">
    <property type="nucleotide sequence ID" value="NM_001181611.1"/>
</dbReference>
<dbReference type="BioGRID" id="33583">
    <property type="interactions" value="175"/>
</dbReference>
<dbReference type="DIP" id="DIP-1606N"/>
<dbReference type="FunCoup" id="P46989">
    <property type="interactions" value="110"/>
</dbReference>
<dbReference type="IntAct" id="P46989">
    <property type="interactions" value="24"/>
</dbReference>
<dbReference type="MINT" id="P46989"/>
<dbReference type="STRING" id="4932.YJL178C"/>
<dbReference type="TCDB" id="9.A.15.1.1">
    <property type="family name" value="the autophagy-related phagophore-formation transporter (apt) family"/>
</dbReference>
<dbReference type="PaxDb" id="4932-YJL178C"/>
<dbReference type="PeptideAtlas" id="P46989"/>
<dbReference type="TopDownProteomics" id="P46989"/>
<dbReference type="EnsemblFungi" id="YJL178C_mRNA">
    <property type="protein sequence ID" value="YJL178C"/>
    <property type="gene ID" value="YJL178C"/>
</dbReference>
<dbReference type="GeneID" id="853261"/>
<dbReference type="KEGG" id="sce:YJL178C"/>
<dbReference type="AGR" id="SGD:S000003714"/>
<dbReference type="SGD" id="S000003714">
    <property type="gene designation" value="ATG27"/>
</dbReference>
<dbReference type="VEuPathDB" id="FungiDB:YJL178C"/>
<dbReference type="eggNOG" id="ENOG502QVJJ">
    <property type="taxonomic scope" value="Eukaryota"/>
</dbReference>
<dbReference type="HOGENOM" id="CLU_089705_0_0_1"/>
<dbReference type="InParanoid" id="P46989"/>
<dbReference type="OMA" id="NKGNAID"/>
<dbReference type="OrthoDB" id="29460at2759"/>
<dbReference type="BioCyc" id="YEAST:G3O-31613-MONOMER"/>
<dbReference type="Reactome" id="R-SCE-8856825">
    <property type="pathway name" value="Cargo recognition for clathrin-mediated endocytosis"/>
</dbReference>
<dbReference type="BioGRID-ORCS" id="853261">
    <property type="hits" value="0 hits in 10 CRISPR screens"/>
</dbReference>
<dbReference type="PRO" id="PR:P46989"/>
<dbReference type="Proteomes" id="UP000002311">
    <property type="component" value="Chromosome X"/>
</dbReference>
<dbReference type="RNAct" id="P46989">
    <property type="molecule type" value="protein"/>
</dbReference>
<dbReference type="GO" id="GO:0030136">
    <property type="term" value="C:clathrin-coated vesicle"/>
    <property type="evidence" value="ECO:0000314"/>
    <property type="project" value="SGD"/>
</dbReference>
<dbReference type="GO" id="GO:0030659">
    <property type="term" value="C:cytoplasmic vesicle membrane"/>
    <property type="evidence" value="ECO:0007669"/>
    <property type="project" value="UniProtKB-SubCell"/>
</dbReference>
<dbReference type="GO" id="GO:0000324">
    <property type="term" value="C:fungal-type vacuole"/>
    <property type="evidence" value="ECO:0007005"/>
    <property type="project" value="SGD"/>
</dbReference>
<dbReference type="GO" id="GO:0000139">
    <property type="term" value="C:Golgi membrane"/>
    <property type="evidence" value="ECO:0007669"/>
    <property type="project" value="UniProtKB-SubCell"/>
</dbReference>
<dbReference type="GO" id="GO:0031966">
    <property type="term" value="C:mitochondrial membrane"/>
    <property type="evidence" value="ECO:0007669"/>
    <property type="project" value="UniProtKB-SubCell"/>
</dbReference>
<dbReference type="GO" id="GO:0005739">
    <property type="term" value="C:mitochondrion"/>
    <property type="evidence" value="ECO:0000314"/>
    <property type="project" value="SGD"/>
</dbReference>
<dbReference type="GO" id="GO:0000407">
    <property type="term" value="C:phagophore assembly site"/>
    <property type="evidence" value="ECO:0000314"/>
    <property type="project" value="SGD"/>
</dbReference>
<dbReference type="GO" id="GO:0034045">
    <property type="term" value="C:phagophore assembly site membrane"/>
    <property type="evidence" value="ECO:0007669"/>
    <property type="project" value="UniProtKB-SubCell"/>
</dbReference>
<dbReference type="GO" id="GO:0005802">
    <property type="term" value="C:trans-Golgi network"/>
    <property type="evidence" value="ECO:0000314"/>
    <property type="project" value="SGD"/>
</dbReference>
<dbReference type="GO" id="GO:0005774">
    <property type="term" value="C:vacuolar membrane"/>
    <property type="evidence" value="ECO:0000314"/>
    <property type="project" value="SGD"/>
</dbReference>
<dbReference type="GO" id="GO:0032266">
    <property type="term" value="F:phosphatidylinositol-3-phosphate binding"/>
    <property type="evidence" value="ECO:0000314"/>
    <property type="project" value="SGD"/>
</dbReference>
<dbReference type="GO" id="GO:0000045">
    <property type="term" value="P:autophagosome assembly"/>
    <property type="evidence" value="ECO:0000315"/>
    <property type="project" value="SGD"/>
</dbReference>
<dbReference type="GO" id="GO:0032258">
    <property type="term" value="P:cytoplasm to vacuole targeting by the Cvt pathway"/>
    <property type="evidence" value="ECO:0000315"/>
    <property type="project" value="SGD"/>
</dbReference>
<dbReference type="GO" id="GO:0016236">
    <property type="term" value="P:macroautophagy"/>
    <property type="evidence" value="ECO:0000314"/>
    <property type="project" value="SGD"/>
</dbReference>
<dbReference type="GO" id="GO:0000425">
    <property type="term" value="P:pexophagy"/>
    <property type="evidence" value="ECO:0000315"/>
    <property type="project" value="SGD"/>
</dbReference>
<dbReference type="GO" id="GO:0034497">
    <property type="term" value="P:protein localization to phagophore assembly site"/>
    <property type="evidence" value="ECO:0000315"/>
    <property type="project" value="SGD"/>
</dbReference>
<dbReference type="GO" id="GO:0016050">
    <property type="term" value="P:vesicle organization"/>
    <property type="evidence" value="ECO:0000315"/>
    <property type="project" value="SGD"/>
</dbReference>
<dbReference type="Gene3D" id="2.70.130.10">
    <property type="entry name" value="Mannose-6-phosphate receptor binding domain"/>
    <property type="match status" value="1"/>
</dbReference>
<dbReference type="InterPro" id="IPR018939">
    <property type="entry name" value="Autophagy-rel_prot_27"/>
</dbReference>
<dbReference type="InterPro" id="IPR009011">
    <property type="entry name" value="Man6P_isomerase_rcpt-bd_dom_sf"/>
</dbReference>
<dbReference type="InterPro" id="IPR044865">
    <property type="entry name" value="MRH_dom"/>
</dbReference>
<dbReference type="Pfam" id="PF09451">
    <property type="entry name" value="ATG27"/>
    <property type="match status" value="1"/>
</dbReference>
<dbReference type="PROSITE" id="PS51914">
    <property type="entry name" value="MRH"/>
    <property type="match status" value="1"/>
</dbReference>
<name>ATG27_YEAST</name>
<sequence length="271" mass="30201">MVSKTWICGFISIITVVQALSCEKHDVLKKYQVGKFSSLTSTERDTPPSTTIEKWWINVCEEHNVEPPEECKKNDMLCGLTDVILPGKDAITTQIIDFDKNIGFNVEETESALTLTLKGATWGANSFDAKLEFQCNDNMKQDELTSHTWADKSIQLTLKGPSGCLKSKDDDKKNGDGDNGKDGDSEGKKPAKKAGGTSWFTWLFLYALLFTLIYLMVVSFLNTRGGSFQDFRAEFIQRSTQFLTSLPEFCKEVVSRILGRSTAQRGGYSAV</sequence>
<proteinExistence type="evidence at protein level"/>
<organism>
    <name type="scientific">Saccharomyces cerevisiae (strain ATCC 204508 / S288c)</name>
    <name type="common">Baker's yeast</name>
    <dbReference type="NCBI Taxonomy" id="559292"/>
    <lineage>
        <taxon>Eukaryota</taxon>
        <taxon>Fungi</taxon>
        <taxon>Dikarya</taxon>
        <taxon>Ascomycota</taxon>
        <taxon>Saccharomycotina</taxon>
        <taxon>Saccharomycetes</taxon>
        <taxon>Saccharomycetales</taxon>
        <taxon>Saccharomycetaceae</taxon>
        <taxon>Saccharomyces</taxon>
    </lineage>
</organism>
<reference key="1">
    <citation type="journal article" date="1996" name="EMBO J.">
        <title>Complete nucleotide sequence of Saccharomyces cerevisiae chromosome X.</title>
        <authorList>
            <person name="Galibert F."/>
            <person name="Alexandraki D."/>
            <person name="Baur A."/>
            <person name="Boles E."/>
            <person name="Chalwatzis N."/>
            <person name="Chuat J.-C."/>
            <person name="Coster F."/>
            <person name="Cziepluch C."/>
            <person name="de Haan M."/>
            <person name="Domdey H."/>
            <person name="Durand P."/>
            <person name="Entian K.-D."/>
            <person name="Gatius M."/>
            <person name="Goffeau A."/>
            <person name="Grivell L.A."/>
            <person name="Hennemann A."/>
            <person name="Herbert C.J."/>
            <person name="Heumann K."/>
            <person name="Hilger F."/>
            <person name="Hollenberg C.P."/>
            <person name="Huang M.-E."/>
            <person name="Jacq C."/>
            <person name="Jauniaux J.-C."/>
            <person name="Katsoulou C."/>
            <person name="Kirchrath L."/>
            <person name="Kleine K."/>
            <person name="Kordes E."/>
            <person name="Koetter P."/>
            <person name="Liebl S."/>
            <person name="Louis E.J."/>
            <person name="Manus V."/>
            <person name="Mewes H.-W."/>
            <person name="Miosga T."/>
            <person name="Obermaier B."/>
            <person name="Perea J."/>
            <person name="Pohl T.M."/>
            <person name="Portetelle D."/>
            <person name="Pujol A."/>
            <person name="Purnelle B."/>
            <person name="Ramezani Rad M."/>
            <person name="Rasmussen S.W."/>
            <person name="Rose M."/>
            <person name="Rossau R."/>
            <person name="Schaaff-Gerstenschlaeger I."/>
            <person name="Smits P.H.M."/>
            <person name="Scarcez T."/>
            <person name="Soriano N."/>
            <person name="To Van D."/>
            <person name="Tzermia M."/>
            <person name="Van Broekhoven A."/>
            <person name="Vandenbol M."/>
            <person name="Wedler H."/>
            <person name="von Wettstein D."/>
            <person name="Wambutt R."/>
            <person name="Zagulski M."/>
            <person name="Zollner A."/>
            <person name="Karpfinger-Hartl L."/>
        </authorList>
    </citation>
    <scope>NUCLEOTIDE SEQUENCE [LARGE SCALE GENOMIC DNA]</scope>
    <source>
        <strain>ATCC 204508 / S288c</strain>
    </source>
</reference>
<reference key="2">
    <citation type="journal article" date="2014" name="G3 (Bethesda)">
        <title>The reference genome sequence of Saccharomyces cerevisiae: Then and now.</title>
        <authorList>
            <person name="Engel S.R."/>
            <person name="Dietrich F.S."/>
            <person name="Fisk D.G."/>
            <person name="Binkley G."/>
            <person name="Balakrishnan R."/>
            <person name="Costanzo M.C."/>
            <person name="Dwight S.S."/>
            <person name="Hitz B.C."/>
            <person name="Karra K."/>
            <person name="Nash R.S."/>
            <person name="Weng S."/>
            <person name="Wong E.D."/>
            <person name="Lloyd P."/>
            <person name="Skrzypek M.S."/>
            <person name="Miyasato S.R."/>
            <person name="Simison M."/>
            <person name="Cherry J.M."/>
        </authorList>
    </citation>
    <scope>GENOME REANNOTATION</scope>
    <source>
        <strain>ATCC 204508 / S288c</strain>
    </source>
</reference>
<reference key="3">
    <citation type="journal article" date="2007" name="Genome Res.">
        <title>Approaching a complete repository of sequence-verified protein-encoding clones for Saccharomyces cerevisiae.</title>
        <authorList>
            <person name="Hu Y."/>
            <person name="Rolfs A."/>
            <person name="Bhullar B."/>
            <person name="Murthy T.V.S."/>
            <person name="Zhu C."/>
            <person name="Berger M.F."/>
            <person name="Camargo A.A."/>
            <person name="Kelley F."/>
            <person name="McCarron S."/>
            <person name="Jepson D."/>
            <person name="Richardson A."/>
            <person name="Raphael J."/>
            <person name="Moreira D."/>
            <person name="Taycher E."/>
            <person name="Zuo D."/>
            <person name="Mohr S."/>
            <person name="Kane M.F."/>
            <person name="Williamson J."/>
            <person name="Simpson A.J.G."/>
            <person name="Bulyk M.L."/>
            <person name="Harlow E."/>
            <person name="Marsischky G."/>
            <person name="Kolodner R.D."/>
            <person name="LaBaer J."/>
        </authorList>
    </citation>
    <scope>NUCLEOTIDE SEQUENCE [GENOMIC DNA]</scope>
    <source>
        <strain>ATCC 204508 / S288c</strain>
    </source>
</reference>
<reference key="4">
    <citation type="journal article" date="2003" name="Genome Biol.">
        <title>Reinvestigation of the Saccharomyces cerevisiae genome annotation by comparison to the genome of a related fungus: Ashbya gossypii.</title>
        <authorList>
            <person name="Brachat S."/>
            <person name="Dietrich F.S."/>
            <person name="Voegeli S."/>
            <person name="Zhang Z."/>
            <person name="Stuart L."/>
            <person name="Lerch A."/>
            <person name="Gates K."/>
            <person name="Gaffney T.D."/>
            <person name="Philippsen P."/>
        </authorList>
    </citation>
    <scope>NUCLEOTIDE SEQUENCE [GENOMIC DNA] OF 4-103</scope>
    <source>
        <strain>ATCC 204511 / S288c / AB972</strain>
    </source>
</reference>
<reference key="5">
    <citation type="journal article" date="2002" name="J. Cell Biol.">
        <title>Novel PtdIns(3)P-binding protein Etf1 functions as an effector of the Vps34 PtdIns 3-kinase in autophagy.</title>
        <authorList>
            <person name="Wurmser A.E."/>
            <person name="Emr S.D."/>
        </authorList>
    </citation>
    <scope>FUNCTION</scope>
    <scope>SUBCELLULAR LOCATION</scope>
    <scope>MUTAGENESIS OF 188-LYS--LYS-193</scope>
</reference>
<reference key="6">
    <citation type="journal article" date="2003" name="Dev. Cell">
        <title>A unified nomenclature for yeast autophagy-related genes.</title>
        <authorList>
            <person name="Klionsky D.J."/>
            <person name="Cregg J.M."/>
            <person name="Dunn W.A. Jr."/>
            <person name="Emr S.D."/>
            <person name="Sakai Y."/>
            <person name="Sandoval I.V."/>
            <person name="Sibirny A."/>
            <person name="Subramani S."/>
            <person name="Thumm M."/>
            <person name="Veenhuis M."/>
            <person name="Ohsumi Y."/>
        </authorList>
    </citation>
    <scope>NOMENCLATURE</scope>
</reference>
<reference key="7">
    <citation type="journal article" date="2003" name="Nature">
        <title>Global analysis of protein localization in budding yeast.</title>
        <authorList>
            <person name="Huh W.-K."/>
            <person name="Falvo J.V."/>
            <person name="Gerke L.C."/>
            <person name="Carroll A.S."/>
            <person name="Howson R.W."/>
            <person name="Weissman J.S."/>
            <person name="O'Shea E.K."/>
        </authorList>
    </citation>
    <scope>SUBCELLULAR LOCATION [LARGE SCALE ANALYSIS]</scope>
</reference>
<reference key="8">
    <citation type="journal article" date="2003" name="Nature">
        <title>Global analysis of protein expression in yeast.</title>
        <authorList>
            <person name="Ghaemmaghami S."/>
            <person name="Huh W.-K."/>
            <person name="Bower K."/>
            <person name="Howson R.W."/>
            <person name="Belle A."/>
            <person name="Dephoure N."/>
            <person name="O'Shea E.K."/>
            <person name="Weissman J.S."/>
        </authorList>
    </citation>
    <scope>LEVEL OF PROTEIN EXPRESSION [LARGE SCALE ANALYSIS]</scope>
</reference>
<reference key="9">
    <citation type="journal article" date="2007" name="Autophagy">
        <title>A cycling protein complex required for selective autophagy.</title>
        <authorList>
            <person name="Legakis J.E."/>
            <person name="Yen W.L."/>
            <person name="Klionsky D.J."/>
        </authorList>
    </citation>
    <scope>SUBCELLULAR LOCATION</scope>
    <scope>IDENTIFICATION IN THE ATG9-ATG23-ATG27 COMPLEX</scope>
    <scope>FUNCTION</scope>
</reference>
<reference key="10">
    <citation type="journal article" date="2007" name="Mol. Biol. Cell">
        <title>Atg27 is required for autophagy-dependent cycling of Atg9.</title>
        <authorList>
            <person name="Yen W.-L."/>
            <person name="Legakis J.E."/>
            <person name="Nair U."/>
            <person name="Klionsky D.J."/>
        </authorList>
    </citation>
    <scope>FUNCTION</scope>
    <scope>SUBCELLULAR LOCATION</scope>
    <scope>TOPOLOGY</scope>
</reference>
<reference key="11">
    <citation type="journal article" date="2012" name="J. Biol. Chem.">
        <title>Atg9 vesicles recruit vesicle-tethering proteins Trs85 and Ypt1 to the autophagosome formation site.</title>
        <authorList>
            <person name="Kakuta S."/>
            <person name="Yamamoto H."/>
            <person name="Negishi L."/>
            <person name="Kondo-Kakuta C."/>
            <person name="Hayashi N."/>
            <person name="Ohsumi Y."/>
        </authorList>
    </citation>
    <scope>SUBCELLULAR LOCATION</scope>
</reference>
<reference key="12">
    <citation type="journal article" date="2012" name="J. Cell Biol.">
        <title>Atg9 vesicles are an important membrane source during early steps of autophagosome formation.</title>
        <authorList>
            <person name="Yamamoto H."/>
            <person name="Kakuta S."/>
            <person name="Watanabe T.M."/>
            <person name="Kitamura A."/>
            <person name="Sekito T."/>
            <person name="Kondo-Kakuta C."/>
            <person name="Ichikawa R."/>
            <person name="Kinjo M."/>
            <person name="Ohsumi Y."/>
        </authorList>
    </citation>
    <scope>FUNCTION</scope>
</reference>